<evidence type="ECO:0000255" key="1">
    <source>
        <dbReference type="HAMAP-Rule" id="MF_00688"/>
    </source>
</evidence>
<protein>
    <recommendedName>
        <fullName evidence="1">Leucyl/phenylalanyl-tRNA--protein transferase</fullName>
        <ecNumber evidence="1">2.3.2.6</ecNumber>
    </recommendedName>
    <alternativeName>
        <fullName evidence="1">L/F-transferase</fullName>
    </alternativeName>
    <alternativeName>
        <fullName evidence="1">Leucyltransferase</fullName>
    </alternativeName>
    <alternativeName>
        <fullName evidence="1">Phenyalanyltransferase</fullName>
    </alternativeName>
</protein>
<gene>
    <name evidence="1" type="primary">aat</name>
    <name type="ordered locus">Ava_1734</name>
</gene>
<dbReference type="EC" id="2.3.2.6" evidence="1"/>
<dbReference type="EMBL" id="CP000117">
    <property type="protein sequence ID" value="ABA21356.1"/>
    <property type="molecule type" value="Genomic_DNA"/>
</dbReference>
<dbReference type="SMR" id="Q3MCD0"/>
<dbReference type="STRING" id="240292.Ava_1734"/>
<dbReference type="KEGG" id="ava:Ava_1734"/>
<dbReference type="eggNOG" id="COG2360">
    <property type="taxonomic scope" value="Bacteria"/>
</dbReference>
<dbReference type="HOGENOM" id="CLU_075045_1_1_3"/>
<dbReference type="Proteomes" id="UP000002533">
    <property type="component" value="Chromosome"/>
</dbReference>
<dbReference type="GO" id="GO:0005737">
    <property type="term" value="C:cytoplasm"/>
    <property type="evidence" value="ECO:0007669"/>
    <property type="project" value="UniProtKB-SubCell"/>
</dbReference>
<dbReference type="GO" id="GO:0008914">
    <property type="term" value="F:leucyl-tRNA--protein transferase activity"/>
    <property type="evidence" value="ECO:0007669"/>
    <property type="project" value="UniProtKB-UniRule"/>
</dbReference>
<dbReference type="GO" id="GO:0030163">
    <property type="term" value="P:protein catabolic process"/>
    <property type="evidence" value="ECO:0007669"/>
    <property type="project" value="UniProtKB-UniRule"/>
</dbReference>
<dbReference type="Gene3D" id="3.40.630.70">
    <property type="entry name" value="Leucyl/phenylalanyl-tRNA-protein transferase, C-terminal domain"/>
    <property type="match status" value="1"/>
</dbReference>
<dbReference type="HAMAP" id="MF_00688">
    <property type="entry name" value="Leu_Phe_trans"/>
    <property type="match status" value="1"/>
</dbReference>
<dbReference type="InterPro" id="IPR016181">
    <property type="entry name" value="Acyl_CoA_acyltransferase"/>
</dbReference>
<dbReference type="InterPro" id="IPR004616">
    <property type="entry name" value="Leu/Phe-tRNA_Trfase"/>
</dbReference>
<dbReference type="InterPro" id="IPR042203">
    <property type="entry name" value="Leu/Phe-tRNA_Trfase_C"/>
</dbReference>
<dbReference type="NCBIfam" id="TIGR00667">
    <property type="entry name" value="aat"/>
    <property type="match status" value="1"/>
</dbReference>
<dbReference type="PANTHER" id="PTHR30098">
    <property type="entry name" value="LEUCYL/PHENYLALANYL-TRNA--PROTEIN TRANSFERASE"/>
    <property type="match status" value="1"/>
</dbReference>
<dbReference type="PANTHER" id="PTHR30098:SF2">
    <property type="entry name" value="LEUCYL_PHENYLALANYL-TRNA--PROTEIN TRANSFERASE"/>
    <property type="match status" value="1"/>
</dbReference>
<dbReference type="Pfam" id="PF03588">
    <property type="entry name" value="Leu_Phe_trans"/>
    <property type="match status" value="1"/>
</dbReference>
<dbReference type="SUPFAM" id="SSF55729">
    <property type="entry name" value="Acyl-CoA N-acyltransferases (Nat)"/>
    <property type="match status" value="1"/>
</dbReference>
<feature type="chain" id="PRO_0000258042" description="Leucyl/phenylalanyl-tRNA--protein transferase">
    <location>
        <begin position="1"/>
        <end position="191"/>
    </location>
</feature>
<reference key="1">
    <citation type="journal article" date="2014" name="Stand. Genomic Sci.">
        <title>Complete genome sequence of Anabaena variabilis ATCC 29413.</title>
        <authorList>
            <person name="Thiel T."/>
            <person name="Pratte B.S."/>
            <person name="Zhong J."/>
            <person name="Goodwin L."/>
            <person name="Copeland A."/>
            <person name="Lucas S."/>
            <person name="Han C."/>
            <person name="Pitluck S."/>
            <person name="Land M.L."/>
            <person name="Kyrpides N.C."/>
            <person name="Woyke T."/>
        </authorList>
    </citation>
    <scope>NUCLEOTIDE SEQUENCE [LARGE SCALE GENOMIC DNA]</scope>
    <source>
        <strain>ATCC 29413 / PCC 7937</strain>
    </source>
</reference>
<proteinExistence type="inferred from homology"/>
<comment type="function">
    <text evidence="1">Functions in the N-end rule pathway of protein degradation where it conjugates Leu, Phe and, less efficiently, Met from aminoacyl-tRNAs to the N-termini of proteins containing an N-terminal arginine or lysine.</text>
</comment>
<comment type="catalytic activity">
    <reaction evidence="1">
        <text>N-terminal L-lysyl-[protein] + L-leucyl-tRNA(Leu) = N-terminal L-leucyl-L-lysyl-[protein] + tRNA(Leu) + H(+)</text>
        <dbReference type="Rhea" id="RHEA:12340"/>
        <dbReference type="Rhea" id="RHEA-COMP:9613"/>
        <dbReference type="Rhea" id="RHEA-COMP:9622"/>
        <dbReference type="Rhea" id="RHEA-COMP:12670"/>
        <dbReference type="Rhea" id="RHEA-COMP:12671"/>
        <dbReference type="ChEBI" id="CHEBI:15378"/>
        <dbReference type="ChEBI" id="CHEBI:65249"/>
        <dbReference type="ChEBI" id="CHEBI:78442"/>
        <dbReference type="ChEBI" id="CHEBI:78494"/>
        <dbReference type="ChEBI" id="CHEBI:133043"/>
        <dbReference type="EC" id="2.3.2.6"/>
    </reaction>
</comment>
<comment type="catalytic activity">
    <reaction evidence="1">
        <text>N-terminal L-arginyl-[protein] + L-leucyl-tRNA(Leu) = N-terminal L-leucyl-L-arginyl-[protein] + tRNA(Leu) + H(+)</text>
        <dbReference type="Rhea" id="RHEA:50416"/>
        <dbReference type="Rhea" id="RHEA-COMP:9613"/>
        <dbReference type="Rhea" id="RHEA-COMP:9622"/>
        <dbReference type="Rhea" id="RHEA-COMP:12672"/>
        <dbReference type="Rhea" id="RHEA-COMP:12673"/>
        <dbReference type="ChEBI" id="CHEBI:15378"/>
        <dbReference type="ChEBI" id="CHEBI:64719"/>
        <dbReference type="ChEBI" id="CHEBI:78442"/>
        <dbReference type="ChEBI" id="CHEBI:78494"/>
        <dbReference type="ChEBI" id="CHEBI:133044"/>
        <dbReference type="EC" id="2.3.2.6"/>
    </reaction>
</comment>
<comment type="catalytic activity">
    <reaction evidence="1">
        <text>L-phenylalanyl-tRNA(Phe) + an N-terminal L-alpha-aminoacyl-[protein] = an N-terminal L-phenylalanyl-L-alpha-aminoacyl-[protein] + tRNA(Phe)</text>
        <dbReference type="Rhea" id="RHEA:43632"/>
        <dbReference type="Rhea" id="RHEA-COMP:9668"/>
        <dbReference type="Rhea" id="RHEA-COMP:9699"/>
        <dbReference type="Rhea" id="RHEA-COMP:10636"/>
        <dbReference type="Rhea" id="RHEA-COMP:10637"/>
        <dbReference type="ChEBI" id="CHEBI:78442"/>
        <dbReference type="ChEBI" id="CHEBI:78531"/>
        <dbReference type="ChEBI" id="CHEBI:78597"/>
        <dbReference type="ChEBI" id="CHEBI:83561"/>
        <dbReference type="EC" id="2.3.2.6"/>
    </reaction>
</comment>
<comment type="subcellular location">
    <subcellularLocation>
        <location evidence="1">Cytoplasm</location>
    </subcellularLocation>
</comment>
<comment type="similarity">
    <text evidence="1">Belongs to the L/F-transferase family.</text>
</comment>
<organism>
    <name type="scientific">Trichormus variabilis (strain ATCC 29413 / PCC 7937)</name>
    <name type="common">Anabaena variabilis</name>
    <dbReference type="NCBI Taxonomy" id="240292"/>
    <lineage>
        <taxon>Bacteria</taxon>
        <taxon>Bacillati</taxon>
        <taxon>Cyanobacteriota</taxon>
        <taxon>Cyanophyceae</taxon>
        <taxon>Nostocales</taxon>
        <taxon>Nostocaceae</taxon>
        <taxon>Trichormus</taxon>
    </lineage>
</organism>
<keyword id="KW-0012">Acyltransferase</keyword>
<keyword id="KW-0963">Cytoplasm</keyword>
<keyword id="KW-0808">Transferase</keyword>
<name>LFTR_TRIV2</name>
<sequence>MQYDIASIIQGYAQGYFLMADDNDCLGWYGSRDRTLIPLDERFRYPKSLQRVLNQERFTVAINRDFAAVVAGCANRESTWISQELQEIYWLLHQTGYAYSFETWQGEELAGGILGIVIGGAFIGESMFYRIPEGSKVAMVKLVERLRQREFVMFDAQMMNPHLERFGAYRIKDKEYKTLLEKALLSSSTLI</sequence>
<accession>Q3MCD0</accession>